<proteinExistence type="inferred from homology"/>
<feature type="chain" id="PRO_0000226340" description="Caveolin-2">
    <location>
        <begin position="1"/>
        <end position="162"/>
    </location>
</feature>
<feature type="topological domain" description="Cytoplasmic" evidence="4">
    <location>
        <begin position="1"/>
        <end position="86"/>
    </location>
</feature>
<feature type="intramembrane region" description="Helical" evidence="4">
    <location>
        <begin position="87"/>
        <end position="107"/>
    </location>
</feature>
<feature type="topological domain" description="Cytoplasmic" evidence="4">
    <location>
        <begin position="108"/>
        <end position="162"/>
    </location>
</feature>
<feature type="modified residue" description="Phosphotyrosine; by SRC" evidence="2">
    <location>
        <position position="19"/>
    </location>
</feature>
<feature type="modified residue" description="Phosphoserine" evidence="3">
    <location>
        <position position="20"/>
    </location>
</feature>
<feature type="modified residue" description="Phosphoserine" evidence="2">
    <location>
        <position position="23"/>
    </location>
</feature>
<feature type="modified residue" description="Phosphotyrosine; by SRC" evidence="2">
    <location>
        <position position="27"/>
    </location>
</feature>
<keyword id="KW-1003">Cell membrane</keyword>
<keyword id="KW-0963">Cytoplasm</keyword>
<keyword id="KW-0333">Golgi apparatus</keyword>
<keyword id="KW-0472">Membrane</keyword>
<keyword id="KW-0539">Nucleus</keyword>
<keyword id="KW-0597">Phosphoprotein</keyword>
<keyword id="KW-1185">Reference proteome</keyword>
<comment type="function">
    <text evidence="1">May act as a scaffolding protein within caveolar membranes. Interacts directly with G-protein alpha subunits and can functionally regulate their activity. Acts as an accessory protein in conjunction with CAV1 in targeting to lipid rafts and driving caveolae formation. Positive regulator of cellular mitogenesis of the MAPK signaling pathway. Required for the insulin-stimulated nuclear translocation and activation of MAPK1 and STAT3, and the subsequent regulation of cell cycle progression (By similarity).</text>
</comment>
<comment type="subunit">
    <text evidence="1">Monomer or homodimer (By similarity). Interacts with CAV1; the interaction forms a stable heterooligomeric complex that is required for targeting to lipid rafts and for caveolae formation. Tyrosine phosphorylated forms do not form heterooligomers with the Tyr-19-phosphorylated form existing as a monomer or dimer, and the Tyr-27-form as a monomer only. Interacts (tyrosine phosphorylated form) with the SH2 domain-containing proteins, RASA1, NCK1 and SRC. Interacts (tyrosine phosphorylated form) with INSR, the interaction (Tyr-27-phosphorylated form) is increased on insulin stimulation. Interacts (Tyr-19 phosphorylated form) with MAPK1 (phosphorylated form); the interaction, promoted by insulin, leads to nuclear location and MAPK1 activation. Interacts with STAT3; the interaction is increased on insulin-induced tyrosine phosphorylation leading to STAT activation (By similarity).</text>
</comment>
<comment type="subcellular location">
    <subcellularLocation>
        <location evidence="1">Nucleus</location>
    </subcellularLocation>
    <subcellularLocation>
        <location evidence="1">Cytoplasm</location>
    </subcellularLocation>
    <subcellularLocation>
        <location>Golgi apparatus membrane</location>
        <topology>Peripheral membrane protein</topology>
    </subcellularLocation>
    <subcellularLocation>
        <location>Cell membrane</location>
        <topology>Peripheral membrane protein</topology>
    </subcellularLocation>
    <subcellularLocation>
        <location>Membrane</location>
        <location>Caveola</location>
        <topology>Peripheral membrane protein</topology>
    </subcellularLocation>
    <text evidence="1">Potential hairpin-like structure in the membrane. Membrane protein of caveolae. Tyr-19-phosphorylated form is enriched at sites of cell-cell contact and is translocated to the nucleus in complex with MAPK1 in response to insulin. Tyr-27-phosphorylated form is located both in the cytoplasm and plasma membrane. CAV1-mediated Ser-23-phosphorylated form locates to the plasma membrane (By similarity).</text>
</comment>
<comment type="PTM">
    <text evidence="1">Phosphorylated on serine and tyrosine residues. CAV1 promotes phosphorylation on Ser-23 which then targets the complex to the plasma membrane, lipid rafts and caveolae. Phosphorylation on both Tyr-19 and Tyr-27 is required for insulin-induced 'Ser-727' phosphorylation of STAT3 and its activation. Phosphorylation on Tyr-19 is required for insulin-induced phosphorylation of MAPK1 and DNA binding of STAT3. Tyrosine phosphorylation is induced by both EGF and insulin (By similarity).</text>
</comment>
<comment type="similarity">
    <text evidence="5">Belongs to the caveolin family.</text>
</comment>
<gene>
    <name type="primary">CAV2</name>
</gene>
<organism>
    <name type="scientific">Equus caballus</name>
    <name type="common">Horse</name>
    <dbReference type="NCBI Taxonomy" id="9796"/>
    <lineage>
        <taxon>Eukaryota</taxon>
        <taxon>Metazoa</taxon>
        <taxon>Chordata</taxon>
        <taxon>Craniata</taxon>
        <taxon>Vertebrata</taxon>
        <taxon>Euteleostomi</taxon>
        <taxon>Mammalia</taxon>
        <taxon>Eutheria</taxon>
        <taxon>Laurasiatheria</taxon>
        <taxon>Perissodactyla</taxon>
        <taxon>Equidae</taxon>
        <taxon>Equus</taxon>
    </lineage>
</organism>
<name>CAV2_HORSE</name>
<accession>Q2QLB1</accession>
<sequence length="162" mass="18094">MGLETEKADVQLFLDDESYSRHSGVDYADPEKFADAGLDRDPHRLNSHLKVGFEDVIAEPVSTHSFDKVWICSHALFEISKYVIYKFLTVFLAIPLAFVAGILFATLSCLHIWIIMPFVKTCLMLLPSVQTIWKSVTDVVIAPLCTSAGRSFSSVSLQLSHD</sequence>
<dbReference type="EMBL" id="DP000020">
    <property type="protein sequence ID" value="ABB89798.1"/>
    <property type="molecule type" value="Genomic_DNA"/>
</dbReference>
<dbReference type="RefSeq" id="NP_001107616.1">
    <property type="nucleotide sequence ID" value="NM_001114144.2"/>
</dbReference>
<dbReference type="SMR" id="Q2QLB1"/>
<dbReference type="FunCoup" id="Q2QLB1">
    <property type="interactions" value="444"/>
</dbReference>
<dbReference type="STRING" id="9796.ENSECAP00000030505"/>
<dbReference type="PaxDb" id="9796-ENSECAP00000030505"/>
<dbReference type="GeneID" id="100071136"/>
<dbReference type="KEGG" id="ecb:100071136"/>
<dbReference type="CTD" id="858"/>
<dbReference type="InParanoid" id="Q2QLB1"/>
<dbReference type="OrthoDB" id="5917823at2759"/>
<dbReference type="Proteomes" id="UP000002281">
    <property type="component" value="Unplaced"/>
</dbReference>
<dbReference type="GO" id="GO:0005901">
    <property type="term" value="C:caveola"/>
    <property type="evidence" value="ECO:0000250"/>
    <property type="project" value="UniProtKB"/>
</dbReference>
<dbReference type="GO" id="GO:0031410">
    <property type="term" value="C:cytoplasmic vesicle"/>
    <property type="evidence" value="ECO:0000318"/>
    <property type="project" value="GO_Central"/>
</dbReference>
<dbReference type="GO" id="GO:0005794">
    <property type="term" value="C:Golgi apparatus"/>
    <property type="evidence" value="ECO:0000318"/>
    <property type="project" value="GO_Central"/>
</dbReference>
<dbReference type="GO" id="GO:0000139">
    <property type="term" value="C:Golgi membrane"/>
    <property type="evidence" value="ECO:0007669"/>
    <property type="project" value="UniProtKB-SubCell"/>
</dbReference>
<dbReference type="GO" id="GO:0005634">
    <property type="term" value="C:nucleus"/>
    <property type="evidence" value="ECO:0007669"/>
    <property type="project" value="UniProtKB-SubCell"/>
</dbReference>
<dbReference type="GO" id="GO:0048471">
    <property type="term" value="C:perinuclear region of cytoplasm"/>
    <property type="evidence" value="ECO:0000250"/>
    <property type="project" value="UniProtKB"/>
</dbReference>
<dbReference type="GO" id="GO:0044853">
    <property type="term" value="C:plasma membrane raft"/>
    <property type="evidence" value="ECO:0000250"/>
    <property type="project" value="UniProtKB"/>
</dbReference>
<dbReference type="GO" id="GO:0031748">
    <property type="term" value="F:D1 dopamine receptor binding"/>
    <property type="evidence" value="ECO:0000250"/>
    <property type="project" value="UniProtKB"/>
</dbReference>
<dbReference type="GO" id="GO:0060090">
    <property type="term" value="F:molecular adaptor activity"/>
    <property type="evidence" value="ECO:0000318"/>
    <property type="project" value="GO_Central"/>
</dbReference>
<dbReference type="GO" id="GO:0019901">
    <property type="term" value="F:protein kinase binding"/>
    <property type="evidence" value="ECO:0000318"/>
    <property type="project" value="GO_Central"/>
</dbReference>
<dbReference type="GO" id="GO:0070836">
    <property type="term" value="P:caveola assembly"/>
    <property type="evidence" value="ECO:0000250"/>
    <property type="project" value="UniProtKB"/>
</dbReference>
<dbReference type="GO" id="GO:0030154">
    <property type="term" value="P:cell differentiation"/>
    <property type="evidence" value="ECO:0000318"/>
    <property type="project" value="GO_Central"/>
</dbReference>
<dbReference type="GO" id="GO:0007029">
    <property type="term" value="P:endoplasmic reticulum organization"/>
    <property type="evidence" value="ECO:0000250"/>
    <property type="project" value="UniProtKB"/>
</dbReference>
<dbReference type="GO" id="GO:0008286">
    <property type="term" value="P:insulin receptor signaling pathway"/>
    <property type="evidence" value="ECO:0000318"/>
    <property type="project" value="GO_Central"/>
</dbReference>
<dbReference type="GO" id="GO:0007005">
    <property type="term" value="P:mitochondrion organization"/>
    <property type="evidence" value="ECO:0000250"/>
    <property type="project" value="UniProtKB"/>
</dbReference>
<dbReference type="GO" id="GO:0001937">
    <property type="term" value="P:negative regulation of endothelial cell proliferation"/>
    <property type="evidence" value="ECO:0000250"/>
    <property type="project" value="UniProtKB"/>
</dbReference>
<dbReference type="GO" id="GO:0060161">
    <property type="term" value="P:positive regulation of dopamine receptor signaling pathway"/>
    <property type="evidence" value="ECO:0000250"/>
    <property type="project" value="UniProtKB"/>
</dbReference>
<dbReference type="GO" id="GO:0051480">
    <property type="term" value="P:regulation of cytosolic calcium ion concentration"/>
    <property type="evidence" value="ECO:0000318"/>
    <property type="project" value="GO_Central"/>
</dbReference>
<dbReference type="GO" id="GO:0048741">
    <property type="term" value="P:skeletal muscle fiber development"/>
    <property type="evidence" value="ECO:0000250"/>
    <property type="project" value="UniProtKB"/>
</dbReference>
<dbReference type="GO" id="GO:0048278">
    <property type="term" value="P:vesicle docking"/>
    <property type="evidence" value="ECO:0000250"/>
    <property type="project" value="UniProtKB"/>
</dbReference>
<dbReference type="GO" id="GO:0006906">
    <property type="term" value="P:vesicle fusion"/>
    <property type="evidence" value="ECO:0000250"/>
    <property type="project" value="UniProtKB"/>
</dbReference>
<dbReference type="InterPro" id="IPR001612">
    <property type="entry name" value="Caveolin"/>
</dbReference>
<dbReference type="InterPro" id="IPR018361">
    <property type="entry name" value="Caveolin_CS"/>
</dbReference>
<dbReference type="PANTHER" id="PTHR10844">
    <property type="entry name" value="CAVEOLIN"/>
    <property type="match status" value="1"/>
</dbReference>
<dbReference type="PANTHER" id="PTHR10844:SF3">
    <property type="entry name" value="CAVEOLIN-2"/>
    <property type="match status" value="1"/>
</dbReference>
<dbReference type="Pfam" id="PF01146">
    <property type="entry name" value="Caveolin"/>
    <property type="match status" value="1"/>
</dbReference>
<dbReference type="PROSITE" id="PS01210">
    <property type="entry name" value="CAVEOLIN"/>
    <property type="match status" value="1"/>
</dbReference>
<reference key="1">
    <citation type="submission" date="2005-11" db="EMBL/GenBank/DDBJ databases">
        <title>NISC comparative sequencing initiative.</title>
        <authorList>
            <person name="Antonellis A."/>
            <person name="Ayele K."/>
            <person name="Benjamin B."/>
            <person name="Blakesley R.W."/>
            <person name="Boakye A."/>
            <person name="Bouffard G.G."/>
            <person name="Brinkley C."/>
            <person name="Brooks S."/>
            <person name="Chu G."/>
            <person name="Coleman H."/>
            <person name="Engle J."/>
            <person name="Gestole M."/>
            <person name="Greene A."/>
            <person name="Guan X."/>
            <person name="Gupta J."/>
            <person name="Haghighi P."/>
            <person name="Han J."/>
            <person name="Hansen N."/>
            <person name="Ho S.-L."/>
            <person name="Hu P."/>
            <person name="Hunter G."/>
            <person name="Hurle B."/>
            <person name="Idol J.R."/>
            <person name="Kwong P."/>
            <person name="Laric P."/>
            <person name="Larson S."/>
            <person name="Lee-Lin S.-Q."/>
            <person name="Legaspi R."/>
            <person name="Madden M."/>
            <person name="Maduro Q.L."/>
            <person name="Maduro V.B."/>
            <person name="Margulies E.H."/>
            <person name="Masiello C."/>
            <person name="Maskeri B."/>
            <person name="McDowell J."/>
            <person name="Mojidi H.A."/>
            <person name="Mullikin J.C."/>
            <person name="Oestreicher J.S."/>
            <person name="Park M."/>
            <person name="Portnoy M.E."/>
            <person name="Prasad A."/>
            <person name="Puri O."/>
            <person name="Reddix-Dugue N."/>
            <person name="Schandler K."/>
            <person name="Schueler M.G."/>
            <person name="Sison C."/>
            <person name="Stantripop S."/>
            <person name="Stephen E."/>
            <person name="Taye A."/>
            <person name="Thomas J.W."/>
            <person name="Thomas P.J."/>
            <person name="Tsipouri V."/>
            <person name="Ung L."/>
            <person name="Vogt J.L."/>
            <person name="Wetherby K.D."/>
            <person name="Young A."/>
            <person name="Green E.D."/>
        </authorList>
    </citation>
    <scope>NUCLEOTIDE SEQUENCE [LARGE SCALE GENOMIC DNA]</scope>
</reference>
<protein>
    <recommendedName>
        <fullName>Caveolin-2</fullName>
    </recommendedName>
</protein>
<evidence type="ECO:0000250" key="1"/>
<evidence type="ECO:0000250" key="2">
    <source>
        <dbReference type="UniProtKB" id="P51636"/>
    </source>
</evidence>
<evidence type="ECO:0000250" key="3">
    <source>
        <dbReference type="UniProtKB" id="Q9WVC3"/>
    </source>
</evidence>
<evidence type="ECO:0000255" key="4"/>
<evidence type="ECO:0000305" key="5"/>